<feature type="chain" id="PRO_0000081336" description="Signal-transduction and transcriptional-control protein">
    <location>
        <begin position="1"/>
        <end position="632"/>
    </location>
</feature>
<feature type="domain" description="PAS" evidence="2">
    <location>
        <begin position="197"/>
        <end position="270"/>
    </location>
</feature>
<feature type="domain" description="Sigma-54 factor interaction" evidence="3">
    <location>
        <begin position="324"/>
        <end position="554"/>
    </location>
</feature>
<feature type="DNA-binding region" description="H-T-H motif" evidence="1">
    <location>
        <begin position="606"/>
        <end position="625"/>
    </location>
</feature>
<feature type="binding site" evidence="3">
    <location>
        <begin position="352"/>
        <end position="359"/>
    </location>
    <ligand>
        <name>ATP</name>
        <dbReference type="ChEBI" id="CHEBI:30616"/>
    </ligand>
</feature>
<feature type="binding site" evidence="3">
    <location>
        <begin position="416"/>
        <end position="425"/>
    </location>
    <ligand>
        <name>ATP</name>
        <dbReference type="ChEBI" id="CHEBI:30616"/>
    </ligand>
</feature>
<accession>P26047</accession>
<accession>Q9L9X1</accession>
<protein>
    <recommendedName>
        <fullName>Signal-transduction and transcriptional-control protein</fullName>
    </recommendedName>
</protein>
<reference key="1">
    <citation type="submission" date="2005-03" db="EMBL/GenBank/DDBJ databases">
        <title>The predicted protein product of a putative regulatory gene from Clostridium beijerinckii NRRL B593 is homologous to the NtrC subfamily of transcriptional regulators.</title>
        <authorList>
            <person name="Rifaat M.M."/>
            <person name="Chen J.S."/>
        </authorList>
    </citation>
    <scope>NUCLEOTIDE SEQUENCE [GENOMIC DNA]</scope>
    <source>
        <strain>NRRL B-593</strain>
    </source>
</reference>
<name>STC_CLOBE</name>
<proteinExistence type="predicted"/>
<sequence length="632" mass="71507">MLRRYTYNEIIKKSHKRCSNYGIKIDIPCPSKILRDEEFNVIIQKNKALIEIARPFMEILYNFLKGSGFSLYFTEKNGVVLTIIGDQDIIRDQIQMGIIEGADMSEKSAGTNGIGTAFAENISLQISGEEHFIKVFQIWTCSSSVVHDEDGNIIGCLNLTGRRQLAHPHTLGLVVAAVKSIENHLKVKKTQNELVKTYQYLNKITDSVNLGIFAVDTKGIIKAINKSACDMLHINEEDVINKNVDTVLDSWKHILQRLRNGQSYEDEEIMYSDKKKRFNINVYPIKDKNSNITGMVGIFKDIQNVYNLVNKYINRTAKYTFDDIIGQSEAMKRLKEQIKSISNSPSTVLIQGESGTGKELIAQSIHNNSNRRSKSFVAINCGAIPKSLIESELFGYEEGAFTGAKRGGCPGKFELANEGTLFLDEIGEMPLDMQVNLLRVLQEGCITRIGGNKCVDVDVRIIAATNKNLKKEIEDGNFREDLYYRLSVIPIYVPPLRERNGDIGILIEHFLKIKADKLGKLIPEIRKNIYENLLSYGWPGNVRELENCIENIVNMNGNTSFNFENRTIKKDVNCYSDVSLEYDMCSLEELEKRAISICINQCGGNISKACRILGINRSTLYIKIKKYNIKVR</sequence>
<evidence type="ECO:0000250" key="1"/>
<evidence type="ECO:0000255" key="2">
    <source>
        <dbReference type="PROSITE-ProRule" id="PRU00140"/>
    </source>
</evidence>
<evidence type="ECO:0000255" key="3">
    <source>
        <dbReference type="PROSITE-ProRule" id="PRU00193"/>
    </source>
</evidence>
<organism>
    <name type="scientific">Clostridium beijerinckii</name>
    <name type="common">Clostridium MP</name>
    <dbReference type="NCBI Taxonomy" id="1520"/>
    <lineage>
        <taxon>Bacteria</taxon>
        <taxon>Bacillati</taxon>
        <taxon>Bacillota</taxon>
        <taxon>Clostridia</taxon>
        <taxon>Eubacteriales</taxon>
        <taxon>Clostridiaceae</taxon>
        <taxon>Clostridium</taxon>
    </lineage>
</organism>
<keyword id="KW-0067">ATP-binding</keyword>
<keyword id="KW-0238">DNA-binding</keyword>
<keyword id="KW-0547">Nucleotide-binding</keyword>
<keyword id="KW-0804">Transcription</keyword>
<keyword id="KW-0805">Transcription regulation</keyword>
<keyword id="KW-0902">Two-component regulatory system</keyword>
<dbReference type="EMBL" id="AF157307">
    <property type="protein sequence ID" value="AAD54950.2"/>
    <property type="molecule type" value="Genomic_DNA"/>
</dbReference>
<dbReference type="SMR" id="P26047"/>
<dbReference type="GO" id="GO:0005524">
    <property type="term" value="F:ATP binding"/>
    <property type="evidence" value="ECO:0007669"/>
    <property type="project" value="UniProtKB-KW"/>
</dbReference>
<dbReference type="GO" id="GO:0016887">
    <property type="term" value="F:ATP hydrolysis activity"/>
    <property type="evidence" value="ECO:0007669"/>
    <property type="project" value="InterPro"/>
</dbReference>
<dbReference type="GO" id="GO:0043565">
    <property type="term" value="F:sequence-specific DNA binding"/>
    <property type="evidence" value="ECO:0007669"/>
    <property type="project" value="InterPro"/>
</dbReference>
<dbReference type="GO" id="GO:0000160">
    <property type="term" value="P:phosphorelay signal transduction system"/>
    <property type="evidence" value="ECO:0007669"/>
    <property type="project" value="UniProtKB-KW"/>
</dbReference>
<dbReference type="GO" id="GO:0006355">
    <property type="term" value="P:regulation of DNA-templated transcription"/>
    <property type="evidence" value="ECO:0007669"/>
    <property type="project" value="InterPro"/>
</dbReference>
<dbReference type="CDD" id="cd00009">
    <property type="entry name" value="AAA"/>
    <property type="match status" value="1"/>
</dbReference>
<dbReference type="CDD" id="cd00130">
    <property type="entry name" value="PAS"/>
    <property type="match status" value="1"/>
</dbReference>
<dbReference type="FunFam" id="3.40.50.300:FF:000006">
    <property type="entry name" value="DNA-binding transcriptional regulator NtrC"/>
    <property type="match status" value="1"/>
</dbReference>
<dbReference type="Gene3D" id="1.10.8.60">
    <property type="match status" value="1"/>
</dbReference>
<dbReference type="Gene3D" id="3.30.450.40">
    <property type="match status" value="1"/>
</dbReference>
<dbReference type="Gene3D" id="1.10.10.60">
    <property type="entry name" value="Homeodomain-like"/>
    <property type="match status" value="1"/>
</dbReference>
<dbReference type="Gene3D" id="3.40.50.300">
    <property type="entry name" value="P-loop containing nucleotide triphosphate hydrolases"/>
    <property type="match status" value="1"/>
</dbReference>
<dbReference type="Gene3D" id="3.30.450.20">
    <property type="entry name" value="PAS domain"/>
    <property type="match status" value="1"/>
</dbReference>
<dbReference type="InterPro" id="IPR003593">
    <property type="entry name" value="AAA+_ATPase"/>
</dbReference>
<dbReference type="InterPro" id="IPR003018">
    <property type="entry name" value="GAF"/>
</dbReference>
<dbReference type="InterPro" id="IPR029016">
    <property type="entry name" value="GAF-like_dom_sf"/>
</dbReference>
<dbReference type="InterPro" id="IPR009057">
    <property type="entry name" value="Homeodomain-like_sf"/>
</dbReference>
<dbReference type="InterPro" id="IPR002197">
    <property type="entry name" value="HTH_Fis"/>
</dbReference>
<dbReference type="InterPro" id="IPR027417">
    <property type="entry name" value="P-loop_NTPase"/>
</dbReference>
<dbReference type="InterPro" id="IPR000014">
    <property type="entry name" value="PAS"/>
</dbReference>
<dbReference type="InterPro" id="IPR035965">
    <property type="entry name" value="PAS-like_dom_sf"/>
</dbReference>
<dbReference type="InterPro" id="IPR002078">
    <property type="entry name" value="Sigma_54_int"/>
</dbReference>
<dbReference type="InterPro" id="IPR025662">
    <property type="entry name" value="Sigma_54_int_dom_ATP-bd_1"/>
</dbReference>
<dbReference type="InterPro" id="IPR025943">
    <property type="entry name" value="Sigma_54_int_dom_ATP-bd_2"/>
</dbReference>
<dbReference type="InterPro" id="IPR025944">
    <property type="entry name" value="Sigma_54_int_dom_CS"/>
</dbReference>
<dbReference type="NCBIfam" id="TIGR00229">
    <property type="entry name" value="sensory_box"/>
    <property type="match status" value="1"/>
</dbReference>
<dbReference type="PANTHER" id="PTHR32071:SF57">
    <property type="entry name" value="C4-DICARBOXYLATE TRANSPORT TRANSCRIPTIONAL REGULATORY PROTEIN DCTD"/>
    <property type="match status" value="1"/>
</dbReference>
<dbReference type="PANTHER" id="PTHR32071">
    <property type="entry name" value="TRANSCRIPTIONAL REGULATORY PROTEIN"/>
    <property type="match status" value="1"/>
</dbReference>
<dbReference type="Pfam" id="PF01590">
    <property type="entry name" value="GAF"/>
    <property type="match status" value="1"/>
</dbReference>
<dbReference type="Pfam" id="PF02954">
    <property type="entry name" value="HTH_8"/>
    <property type="match status" value="1"/>
</dbReference>
<dbReference type="Pfam" id="PF13426">
    <property type="entry name" value="PAS_9"/>
    <property type="match status" value="1"/>
</dbReference>
<dbReference type="Pfam" id="PF00158">
    <property type="entry name" value="Sigma54_activat"/>
    <property type="match status" value="1"/>
</dbReference>
<dbReference type="PRINTS" id="PR01590">
    <property type="entry name" value="HTHFIS"/>
</dbReference>
<dbReference type="SMART" id="SM00382">
    <property type="entry name" value="AAA"/>
    <property type="match status" value="1"/>
</dbReference>
<dbReference type="SMART" id="SM00091">
    <property type="entry name" value="PAS"/>
    <property type="match status" value="1"/>
</dbReference>
<dbReference type="SUPFAM" id="SSF46689">
    <property type="entry name" value="Homeodomain-like"/>
    <property type="match status" value="1"/>
</dbReference>
<dbReference type="SUPFAM" id="SSF52540">
    <property type="entry name" value="P-loop containing nucleoside triphosphate hydrolases"/>
    <property type="match status" value="1"/>
</dbReference>
<dbReference type="SUPFAM" id="SSF55785">
    <property type="entry name" value="PYP-like sensor domain (PAS domain)"/>
    <property type="match status" value="1"/>
</dbReference>
<dbReference type="PROSITE" id="PS50112">
    <property type="entry name" value="PAS"/>
    <property type="match status" value="1"/>
</dbReference>
<dbReference type="PROSITE" id="PS00675">
    <property type="entry name" value="SIGMA54_INTERACT_1"/>
    <property type="match status" value="1"/>
</dbReference>
<dbReference type="PROSITE" id="PS00676">
    <property type="entry name" value="SIGMA54_INTERACT_2"/>
    <property type="match status" value="1"/>
</dbReference>
<dbReference type="PROSITE" id="PS00688">
    <property type="entry name" value="SIGMA54_INTERACT_3"/>
    <property type="match status" value="1"/>
</dbReference>
<dbReference type="PROSITE" id="PS50045">
    <property type="entry name" value="SIGMA54_INTERACT_4"/>
    <property type="match status" value="1"/>
</dbReference>
<gene>
    <name type="primary">stc</name>
</gene>